<comment type="function">
    <text evidence="2">ATPase component of the type II secretion system required for the energy-dependent secretion of extracellular factors such as proteases and toxins from the periplasm. Acts as a molecular motor to provide the energy that is required for assembly of the pseudopilus and the extrusion of substrates generated in the cytoplasm.</text>
</comment>
<comment type="catalytic activity">
    <reaction evidence="1">
        <text>ATP + H2O + cellular proteinSide 1 = ADP + phosphate + cellular proteinSide 2.</text>
        <dbReference type="EC" id="7.4.2.8"/>
    </reaction>
</comment>
<comment type="subunit">
    <text evidence="1 4">Forms homooligomers; most probably hexamers (By similarity). Interacts with XpsL/GspL (PubMed:16162504).</text>
</comment>
<comment type="interaction">
    <interactant intactId="EBI-8167266">
        <id>P31742</id>
    </interactant>
    <interactant intactId="EBI-8167266">
        <id>P31742</id>
        <label>xpsE</label>
    </interactant>
    <organismsDiffer>false</organismsDiffer>
    <experiments>2</experiments>
</comment>
<comment type="subcellular location">
    <subcellularLocation>
        <location evidence="2">Cell inner membrane</location>
    </subcellularLocation>
    <text evidence="2">Membrane association is not an intrinsic property but requires the XpsL/GspL gene product.</text>
</comment>
<comment type="similarity">
    <text evidence="5">Belongs to the GSP E family.</text>
</comment>
<comment type="sequence caution" evidence="5">
    <conflict type="erroneous initiation">
        <sequence resource="EMBL-CDS" id="AAM39976"/>
    </conflict>
    <text>Extended N-terminus.</text>
</comment>
<comment type="sequence caution" evidence="5">
    <conflict type="erroneous initiation">
        <sequence resource="EMBL-CDS" id="CAA41803"/>
    </conflict>
    <text>Truncated N-terminus.</text>
</comment>
<organism>
    <name type="scientific">Xanthomonas campestris pv. campestris (strain ATCC 33913 / DSM 3586 / NCPPB 528 / LMG 568 / P 25)</name>
    <dbReference type="NCBI Taxonomy" id="190485"/>
    <lineage>
        <taxon>Bacteria</taxon>
        <taxon>Pseudomonadati</taxon>
        <taxon>Pseudomonadota</taxon>
        <taxon>Gammaproteobacteria</taxon>
        <taxon>Lysobacterales</taxon>
        <taxon>Lysobacteraceae</taxon>
        <taxon>Xanthomonas</taxon>
    </lineage>
</organism>
<sequence length="567" mass="63144">MEQRSAETRIVEALLERRRLKDTDLVRARQLQAESGMGLLALLGRLGLVSERDHAETCAEVLGLPLVDARQLGDTPPEMLPEVQGLSLRFLKQFHLCPVGERDGRLDLWIADPYDDYAIDAVRLATGLPLLLQVGLRSEIDDLIERWYGQGRSAMGTIVETADGDASSTDDIEALRDLASEAPVIRLVNLVIQHAVELRASDIHIEPFESRLKVRYRVDGVLVEGESPPAKLTAAVISRIKIMAKLNIAERRLPQDGRIMLRVQGKELDLRVSTVPTAHGESVVMRLLDRETVVFDFYKLGFTEDFLPQFRKVLEQPHGIMLVTGPTGSGKTTTLYTALSQLNTSDVKIITVEDPVEYQIEGINQIQAKPQIGLDFANALRSIVRQDPDIIMIGEMRDLETARIAIQSALTGHLVLSTLHTNNAAGGITRLLDMGVEDYLLTSTINGILAQRLVRKLDLANAERYAASPEEIERFDLRRLQPDGEIFLYRPRATAAAPTGYLGRTTIVEFLVMNDELRRAVMRRAGMGEIEQLARKSGMRTMYEDGLSKALRGETTIEEVLRVTEDA</sequence>
<gene>
    <name type="primary">xpsE</name>
    <name type="synonym">pefE</name>
    <name type="ordered locus">XCC0660</name>
</gene>
<reference key="1">
    <citation type="journal article" date="1991" name="Mol. Gen. Genet.">
        <title>Structural characterization of protein secretion genes of the bacterial phytopathogen Xanthomonas campestris pathovar campestris: relatedness to secretion systems of other Gram-negative bacteria.</title>
        <authorList>
            <person name="Dums F."/>
            <person name="Dow J.M."/>
            <person name="Daniels M.J."/>
        </authorList>
    </citation>
    <scope>NUCLEOTIDE SEQUENCE [GENOMIC DNA]</scope>
    <source>
        <strain>8000 NCPPB 1145</strain>
    </source>
</reference>
<reference key="2">
    <citation type="submission" date="2005-08" db="EMBL/GenBank/DDBJ databases">
        <authorList>
            <person name="Hu N.-T.T."/>
            <person name="Hung M.-N."/>
            <person name="Wang K.C."/>
        </authorList>
    </citation>
    <scope>NUCLEOTIDE SEQUENCE [GENOMIC DNA]</scope>
    <source>
        <strain>Xc1701</strain>
    </source>
</reference>
<reference key="3">
    <citation type="journal article" date="2002" name="Nature">
        <title>Comparison of the genomes of two Xanthomonas pathogens with differing host specificities.</title>
        <authorList>
            <person name="da Silva A.C.R."/>
            <person name="Ferro J.A."/>
            <person name="Reinach F.C."/>
            <person name="Farah C.S."/>
            <person name="Furlan L.R."/>
            <person name="Quaggio R.B."/>
            <person name="Monteiro-Vitorello C.B."/>
            <person name="Van Sluys M.A."/>
            <person name="Almeida N.F. Jr."/>
            <person name="Alves L.M.C."/>
            <person name="do Amaral A.M."/>
            <person name="Bertolini M.C."/>
            <person name="Camargo L.E.A."/>
            <person name="Camarotte G."/>
            <person name="Cannavan F."/>
            <person name="Cardozo J."/>
            <person name="Chambergo F."/>
            <person name="Ciapina L.P."/>
            <person name="Cicarelli R.M.B."/>
            <person name="Coutinho L.L."/>
            <person name="Cursino-Santos J.R."/>
            <person name="El-Dorry H."/>
            <person name="Faria J.B."/>
            <person name="Ferreira A.J.S."/>
            <person name="Ferreira R.C.C."/>
            <person name="Ferro M.I.T."/>
            <person name="Formighieri E.F."/>
            <person name="Franco M.C."/>
            <person name="Greggio C.C."/>
            <person name="Gruber A."/>
            <person name="Katsuyama A.M."/>
            <person name="Kishi L.T."/>
            <person name="Leite R.P."/>
            <person name="Lemos E.G.M."/>
            <person name="Lemos M.V.F."/>
            <person name="Locali E.C."/>
            <person name="Machado M.A."/>
            <person name="Madeira A.M.B.N."/>
            <person name="Martinez-Rossi N.M."/>
            <person name="Martins E.C."/>
            <person name="Meidanis J."/>
            <person name="Menck C.F.M."/>
            <person name="Miyaki C.Y."/>
            <person name="Moon D.H."/>
            <person name="Moreira L.M."/>
            <person name="Novo M.T.M."/>
            <person name="Okura V.K."/>
            <person name="Oliveira M.C."/>
            <person name="Oliveira V.R."/>
            <person name="Pereira H.A."/>
            <person name="Rossi A."/>
            <person name="Sena J.A.D."/>
            <person name="Silva C."/>
            <person name="de Souza R.F."/>
            <person name="Spinola L.A.F."/>
            <person name="Takita M.A."/>
            <person name="Tamura R.E."/>
            <person name="Teixeira E.C."/>
            <person name="Tezza R.I.D."/>
            <person name="Trindade dos Santos M."/>
            <person name="Truffi D."/>
            <person name="Tsai S.M."/>
            <person name="White F.F."/>
            <person name="Setubal J.C."/>
            <person name="Kitajima J.P."/>
        </authorList>
    </citation>
    <scope>NUCLEOTIDE SEQUENCE [LARGE SCALE GENOMIC DNA]</scope>
    <source>
        <strain>ATCC 33913 / DSM 3586 / NCPPB 528 / LMG 568 / P 25</strain>
    </source>
</reference>
<reference key="4">
    <citation type="journal article" date="2005" name="J. Biol. Chem.">
        <title>Structure and function of the XpsE N-terminal domain, an essential component of the Xanthomonas campestris type II secretion system.</title>
        <authorList>
            <person name="Chen Y."/>
            <person name="Shiue S.J."/>
            <person name="Huang C.W."/>
            <person name="Chang J.L."/>
            <person name="Chien Y.L."/>
            <person name="Hu N.T."/>
            <person name="Chan N.L."/>
        </authorList>
    </citation>
    <scope>X-RAY CRYSTALLOGRAPHY (2.00 ANGSTROMS) OF 1-149</scope>
    <scope>INTERACTION WITH XPSL</scope>
    <scope>MUTAGENESIS OF LEU-40</scope>
</reference>
<dbReference type="EC" id="7.4.2.8" evidence="1"/>
<dbReference type="EMBL" id="X59079">
    <property type="protein sequence ID" value="CAA41803.1"/>
    <property type="status" value="ALT_INIT"/>
    <property type="molecule type" value="Genomic_DNA"/>
</dbReference>
<dbReference type="EMBL" id="L02630">
    <property type="protein sequence ID" value="AAC27375.4"/>
    <property type="molecule type" value="Genomic_DNA"/>
</dbReference>
<dbReference type="EMBL" id="AE008922">
    <property type="protein sequence ID" value="AAM39976.1"/>
    <property type="status" value="ALT_INIT"/>
    <property type="molecule type" value="Genomic_DNA"/>
</dbReference>
<dbReference type="PIR" id="S17937">
    <property type="entry name" value="S17937"/>
</dbReference>
<dbReference type="PIR" id="T12056">
    <property type="entry name" value="T12056"/>
</dbReference>
<dbReference type="RefSeq" id="NP_636052.1">
    <property type="nucleotide sequence ID" value="NC_003902.1"/>
</dbReference>
<dbReference type="PDB" id="2D27">
    <property type="method" value="X-ray"/>
    <property type="resolution" value="2.21 A"/>
    <property type="chains" value="A=1-149"/>
</dbReference>
<dbReference type="PDB" id="2D28">
    <property type="method" value="X-ray"/>
    <property type="resolution" value="2.00 A"/>
    <property type="chains" value="C=1-149"/>
</dbReference>
<dbReference type="PDBsum" id="2D27"/>
<dbReference type="PDBsum" id="2D28"/>
<dbReference type="SMR" id="P31742"/>
<dbReference type="IntAct" id="P31742">
    <property type="interactions" value="1"/>
</dbReference>
<dbReference type="MINT" id="P31742"/>
<dbReference type="STRING" id="190485.XCC0660"/>
<dbReference type="EnsemblBacteria" id="AAM39976">
    <property type="protein sequence ID" value="AAM39976"/>
    <property type="gene ID" value="XCC0660"/>
</dbReference>
<dbReference type="KEGG" id="xcc:XCC0660"/>
<dbReference type="PATRIC" id="fig|190485.4.peg.724"/>
<dbReference type="eggNOG" id="COG2804">
    <property type="taxonomic scope" value="Bacteria"/>
</dbReference>
<dbReference type="HOGENOM" id="CLU_013446_10_6_6"/>
<dbReference type="OrthoDB" id="9804785at2"/>
<dbReference type="BRENDA" id="7.4.2.8">
    <property type="organism ID" value="6708"/>
</dbReference>
<dbReference type="EvolutionaryTrace" id="P31742"/>
<dbReference type="Proteomes" id="UP000001010">
    <property type="component" value="Chromosome"/>
</dbReference>
<dbReference type="GO" id="GO:0005886">
    <property type="term" value="C:plasma membrane"/>
    <property type="evidence" value="ECO:0000318"/>
    <property type="project" value="GO_Central"/>
</dbReference>
<dbReference type="GO" id="GO:0015627">
    <property type="term" value="C:type II protein secretion system complex"/>
    <property type="evidence" value="ECO:0007669"/>
    <property type="project" value="InterPro"/>
</dbReference>
<dbReference type="GO" id="GO:0005524">
    <property type="term" value="F:ATP binding"/>
    <property type="evidence" value="ECO:0007669"/>
    <property type="project" value="UniProtKB-KW"/>
</dbReference>
<dbReference type="GO" id="GO:0016887">
    <property type="term" value="F:ATP hydrolysis activity"/>
    <property type="evidence" value="ECO:0000318"/>
    <property type="project" value="GO_Central"/>
</dbReference>
<dbReference type="GO" id="GO:0042802">
    <property type="term" value="F:identical protein binding"/>
    <property type="evidence" value="ECO:0000353"/>
    <property type="project" value="IntAct"/>
</dbReference>
<dbReference type="GO" id="GO:0008564">
    <property type="term" value="F:protein-exporting ATPase activity"/>
    <property type="evidence" value="ECO:0007669"/>
    <property type="project" value="UniProtKB-EC"/>
</dbReference>
<dbReference type="GO" id="GO:0015628">
    <property type="term" value="P:protein secretion by the type II secretion system"/>
    <property type="evidence" value="ECO:0007669"/>
    <property type="project" value="InterPro"/>
</dbReference>
<dbReference type="CDD" id="cd01129">
    <property type="entry name" value="PulE-GspE-like"/>
    <property type="match status" value="1"/>
</dbReference>
<dbReference type="FunFam" id="3.30.450.90:FF:000001">
    <property type="entry name" value="Type II secretion system ATPase GspE"/>
    <property type="match status" value="1"/>
</dbReference>
<dbReference type="FunFam" id="3.40.50.300:FF:000398">
    <property type="entry name" value="Type IV pilus assembly ATPase PilB"/>
    <property type="match status" value="1"/>
</dbReference>
<dbReference type="Gene3D" id="1.10.40.70">
    <property type="match status" value="1"/>
</dbReference>
<dbReference type="Gene3D" id="3.30.450.90">
    <property type="match status" value="1"/>
</dbReference>
<dbReference type="Gene3D" id="3.40.50.300">
    <property type="entry name" value="P-loop containing nucleotide triphosphate hydrolases"/>
    <property type="match status" value="1"/>
</dbReference>
<dbReference type="Gene3D" id="3.30.300.160">
    <property type="entry name" value="Type II secretion system, protein E, N-terminal domain"/>
    <property type="match status" value="1"/>
</dbReference>
<dbReference type="InterPro" id="IPR003593">
    <property type="entry name" value="AAA+_ATPase"/>
</dbReference>
<dbReference type="InterPro" id="IPR027417">
    <property type="entry name" value="P-loop_NTPase"/>
</dbReference>
<dbReference type="InterPro" id="IPR001482">
    <property type="entry name" value="T2SS/T4SS_dom"/>
</dbReference>
<dbReference type="InterPro" id="IPR037257">
    <property type="entry name" value="T2SS_E_N_sf"/>
</dbReference>
<dbReference type="InterPro" id="IPR013369">
    <property type="entry name" value="T2SS_GspE"/>
</dbReference>
<dbReference type="InterPro" id="IPR007831">
    <property type="entry name" value="T2SS_GspE_N"/>
</dbReference>
<dbReference type="NCBIfam" id="TIGR02533">
    <property type="entry name" value="type_II_gspE"/>
    <property type="match status" value="1"/>
</dbReference>
<dbReference type="PANTHER" id="PTHR30258:SF2">
    <property type="entry name" value="COMG OPERON PROTEIN 1"/>
    <property type="match status" value="1"/>
</dbReference>
<dbReference type="PANTHER" id="PTHR30258">
    <property type="entry name" value="TYPE II SECRETION SYSTEM PROTEIN GSPE-RELATED"/>
    <property type="match status" value="1"/>
</dbReference>
<dbReference type="Pfam" id="PF05157">
    <property type="entry name" value="MshEN"/>
    <property type="match status" value="1"/>
</dbReference>
<dbReference type="Pfam" id="PF00437">
    <property type="entry name" value="T2SSE"/>
    <property type="match status" value="1"/>
</dbReference>
<dbReference type="SMART" id="SM00382">
    <property type="entry name" value="AAA"/>
    <property type="match status" value="1"/>
</dbReference>
<dbReference type="SUPFAM" id="SSF160246">
    <property type="entry name" value="EspE N-terminal domain-like"/>
    <property type="match status" value="1"/>
</dbReference>
<dbReference type="SUPFAM" id="SSF52540">
    <property type="entry name" value="P-loop containing nucleoside triphosphate hydrolases"/>
    <property type="match status" value="1"/>
</dbReference>
<dbReference type="PROSITE" id="PS00662">
    <property type="entry name" value="T2SP_E"/>
    <property type="match status" value="1"/>
</dbReference>
<evidence type="ECO:0000250" key="1">
    <source>
        <dbReference type="UniProtKB" id="P37093"/>
    </source>
</evidence>
<evidence type="ECO:0000250" key="2">
    <source>
        <dbReference type="UniProtKB" id="Q00512"/>
    </source>
</evidence>
<evidence type="ECO:0000255" key="3"/>
<evidence type="ECO:0000269" key="4">
    <source>
    </source>
</evidence>
<evidence type="ECO:0000305" key="5"/>
<evidence type="ECO:0007829" key="6">
    <source>
        <dbReference type="PDB" id="2D27"/>
    </source>
</evidence>
<evidence type="ECO:0007829" key="7">
    <source>
        <dbReference type="PDB" id="2D28"/>
    </source>
</evidence>
<feature type="chain" id="PRO_0000207291" description="Type II secretion system protein E">
    <location>
        <begin position="1"/>
        <end position="567"/>
    </location>
</feature>
<feature type="binding site" evidence="3">
    <location>
        <begin position="325"/>
        <end position="332"/>
    </location>
    <ligand>
        <name>ATP</name>
        <dbReference type="ChEBI" id="CHEBI:30616"/>
    </ligand>
</feature>
<feature type="mutagenesis site" description="Complete loss of interaction with XpsL." evidence="4">
    <original>L</original>
    <variation>D</variation>
    <location>
        <position position="40"/>
    </location>
</feature>
<feature type="sequence conflict" description="In Ref. 1; CAA41803." evidence="5" ref="1">
    <original>L</original>
    <variation>V</variation>
    <location>
        <position position="88"/>
    </location>
</feature>
<feature type="sequence conflict" description="In Ref. 2; AAC27375." evidence="5" ref="2">
    <original>Q</original>
    <variation>H</variation>
    <location>
        <position position="133"/>
    </location>
</feature>
<feature type="helix" evidence="7">
    <location>
        <begin position="6"/>
        <end position="16"/>
    </location>
</feature>
<feature type="helix" evidence="7">
    <location>
        <begin position="22"/>
        <end position="27"/>
    </location>
</feature>
<feature type="helix" evidence="7">
    <location>
        <begin position="39"/>
        <end position="45"/>
    </location>
</feature>
<feature type="helix" evidence="7">
    <location>
        <begin position="51"/>
        <end position="62"/>
    </location>
</feature>
<feature type="helix" evidence="7">
    <location>
        <begin position="69"/>
        <end position="71"/>
    </location>
</feature>
<feature type="helix" evidence="6">
    <location>
        <begin position="81"/>
        <end position="83"/>
    </location>
</feature>
<feature type="helix" evidence="7">
    <location>
        <begin position="88"/>
        <end position="94"/>
    </location>
</feature>
<feature type="strand" evidence="7">
    <location>
        <begin position="96"/>
        <end position="102"/>
    </location>
</feature>
<feature type="strand" evidence="7">
    <location>
        <begin position="105"/>
        <end position="111"/>
    </location>
</feature>
<feature type="helix" evidence="7">
    <location>
        <begin position="116"/>
        <end position="126"/>
    </location>
</feature>
<feature type="strand" evidence="7">
    <location>
        <begin position="130"/>
        <end position="134"/>
    </location>
</feature>
<feature type="helix" evidence="7">
    <location>
        <begin position="137"/>
        <end position="147"/>
    </location>
</feature>
<proteinExistence type="evidence at protein level"/>
<accession>P31742</accession>
<name>GSPE_XANCP</name>
<keyword id="KW-0002">3D-structure</keyword>
<keyword id="KW-0067">ATP-binding</keyword>
<keyword id="KW-0997">Cell inner membrane</keyword>
<keyword id="KW-1003">Cell membrane</keyword>
<keyword id="KW-0472">Membrane</keyword>
<keyword id="KW-0547">Nucleotide-binding</keyword>
<keyword id="KW-0653">Protein transport</keyword>
<keyword id="KW-1185">Reference proteome</keyword>
<keyword id="KW-1278">Translocase</keyword>
<keyword id="KW-0813">Transport</keyword>
<protein>
    <recommendedName>
        <fullName>Type II secretion system protein E</fullName>
        <shortName>T2SS protein E</shortName>
        <ecNumber evidence="1">7.4.2.8</ecNumber>
    </recommendedName>
    <alternativeName>
        <fullName>General secretion pathway protein E</fullName>
    </alternativeName>
    <alternativeName>
        <fullName>Type II traffic warden ATPase</fullName>
    </alternativeName>
</protein>